<evidence type="ECO:0000250" key="1"/>
<evidence type="ECO:0000255" key="2"/>
<evidence type="ECO:0000255" key="3">
    <source>
        <dbReference type="PROSITE-ProRule" id="PRU00716"/>
    </source>
</evidence>
<evidence type="ECO:0000269" key="4">
    <source>
    </source>
</evidence>
<evidence type="ECO:0000269" key="5">
    <source>
    </source>
</evidence>
<evidence type="ECO:0000305" key="6"/>
<feature type="transit peptide" description="Mitochondrion" evidence="2">
    <location>
        <begin position="1"/>
        <end position="24"/>
    </location>
</feature>
<feature type="chain" id="PRO_0000413206" description="Ferric reduction oxidase 8, mitochondrial">
    <location>
        <begin position="25"/>
        <end position="728"/>
    </location>
</feature>
<feature type="transmembrane region" description="Helical" evidence="1">
    <location>
        <begin position="56"/>
        <end position="74"/>
    </location>
</feature>
<feature type="transmembrane region" description="Helical" evidence="1">
    <location>
        <begin position="104"/>
        <end position="127"/>
    </location>
</feature>
<feature type="transmembrane region" description="Helical" evidence="1">
    <location>
        <begin position="194"/>
        <end position="217"/>
    </location>
</feature>
<feature type="transmembrane region" description="Helical" evidence="1">
    <location>
        <begin position="269"/>
        <end position="293"/>
    </location>
</feature>
<feature type="transmembrane region" description="Helical" evidence="1">
    <location>
        <begin position="316"/>
        <end position="336"/>
    </location>
</feature>
<feature type="transmembrane region" description="Helical" evidence="1">
    <location>
        <begin position="537"/>
        <end position="559"/>
    </location>
</feature>
<feature type="transmembrane region" description="Helical" evidence="1">
    <location>
        <begin position="595"/>
        <end position="616"/>
    </location>
</feature>
<feature type="domain" description="Ferric oxidoreductase">
    <location>
        <begin position="159"/>
        <end position="281"/>
    </location>
</feature>
<feature type="domain" description="FAD-binding FR-type" evidence="3">
    <location>
        <begin position="300"/>
        <end position="418"/>
    </location>
</feature>
<feature type="binding site" description="axial binding residue" evidence="1">
    <location>
        <position position="195"/>
    </location>
    <ligand>
        <name>heme</name>
        <dbReference type="ChEBI" id="CHEBI:30413"/>
    </ligand>
    <ligandPart>
        <name>Fe</name>
        <dbReference type="ChEBI" id="CHEBI:18248"/>
    </ligandPart>
</feature>
<feature type="binding site" description="axial binding residue" evidence="1">
    <location>
        <position position="209"/>
    </location>
    <ligand>
        <name>heme</name>
        <dbReference type="ChEBI" id="CHEBI:30413"/>
    </ligand>
    <ligandPart>
        <name>Fe</name>
        <dbReference type="ChEBI" id="CHEBI:18248"/>
    </ligandPart>
</feature>
<feature type="binding site" description="axial binding residue" evidence="1">
    <location>
        <position position="270"/>
    </location>
    <ligand>
        <name>heme</name>
        <dbReference type="ChEBI" id="CHEBI:30413"/>
    </ligand>
    <ligandPart>
        <name>Fe</name>
        <dbReference type="ChEBI" id="CHEBI:18248"/>
    </ligandPart>
</feature>
<feature type="binding site" description="axial binding residue" evidence="1">
    <location>
        <position position="283"/>
    </location>
    <ligand>
        <name>heme</name>
        <dbReference type="ChEBI" id="CHEBI:30413"/>
    </ligand>
    <ligandPart>
        <name>Fe</name>
        <dbReference type="ChEBI" id="CHEBI:18248"/>
    </ligandPart>
</feature>
<feature type="binding site" evidence="2">
    <location>
        <begin position="358"/>
        <end position="361"/>
    </location>
    <ligand>
        <name>FAD</name>
        <dbReference type="ChEBI" id="CHEBI:57692"/>
    </ligand>
</feature>
<feature type="binding site" evidence="2">
    <location>
        <begin position="410"/>
        <end position="413"/>
    </location>
    <ligand>
        <name>NAD(+)</name>
        <dbReference type="ChEBI" id="CHEBI:57540"/>
    </ligand>
</feature>
<dbReference type="EC" id="1.16.1.7"/>
<dbReference type="EMBL" id="AB024031">
    <property type="protein sequence ID" value="BAB09387.1"/>
    <property type="status" value="ALT_SEQ"/>
    <property type="molecule type" value="Genomic_DNA"/>
</dbReference>
<dbReference type="EMBL" id="CP002688">
    <property type="protein sequence ID" value="AED95905.1"/>
    <property type="molecule type" value="Genomic_DNA"/>
</dbReference>
<dbReference type="EMBL" id="AY074287">
    <property type="protein sequence ID" value="AAL66984.1"/>
    <property type="molecule type" value="mRNA"/>
</dbReference>
<dbReference type="EMBL" id="BT003007">
    <property type="protein sequence ID" value="AAO22815.1"/>
    <property type="molecule type" value="mRNA"/>
</dbReference>
<dbReference type="RefSeq" id="NP_199827.2">
    <property type="nucleotide sequence ID" value="NM_124395.5"/>
</dbReference>
<dbReference type="SMR" id="Q8VY13"/>
<dbReference type="FunCoup" id="Q8VY13">
    <property type="interactions" value="56"/>
</dbReference>
<dbReference type="STRING" id="3702.Q8VY13"/>
<dbReference type="TCDB" id="5.B.1.4.1">
    <property type="family name" value="the phagocyte (gp91(phox)) nadph oxidase family"/>
</dbReference>
<dbReference type="PaxDb" id="3702-AT5G50160.1"/>
<dbReference type="ProteomicsDB" id="230563"/>
<dbReference type="EnsemblPlants" id="AT5G50160.1">
    <property type="protein sequence ID" value="AT5G50160.1"/>
    <property type="gene ID" value="AT5G50160"/>
</dbReference>
<dbReference type="GeneID" id="835081"/>
<dbReference type="Gramene" id="AT5G50160.1">
    <property type="protein sequence ID" value="AT5G50160.1"/>
    <property type="gene ID" value="AT5G50160"/>
</dbReference>
<dbReference type="KEGG" id="ath:AT5G50160"/>
<dbReference type="Araport" id="AT5G50160"/>
<dbReference type="TAIR" id="AT5G50160">
    <property type="gene designation" value="FRO8"/>
</dbReference>
<dbReference type="eggNOG" id="KOG0039">
    <property type="taxonomic scope" value="Eukaryota"/>
</dbReference>
<dbReference type="HOGENOM" id="CLU_014777_1_0_1"/>
<dbReference type="InParanoid" id="Q8VY13"/>
<dbReference type="OMA" id="HHIQDEM"/>
<dbReference type="PhylomeDB" id="Q8VY13"/>
<dbReference type="BioCyc" id="ARA:AT5G50160-MONOMER"/>
<dbReference type="PRO" id="PR:Q8VY13"/>
<dbReference type="Proteomes" id="UP000006548">
    <property type="component" value="Chromosome 5"/>
</dbReference>
<dbReference type="ExpressionAtlas" id="Q8VY13">
    <property type="expression patterns" value="baseline and differential"/>
</dbReference>
<dbReference type="GO" id="GO:0031966">
    <property type="term" value="C:mitochondrial membrane"/>
    <property type="evidence" value="ECO:0007669"/>
    <property type="project" value="UniProtKB-SubCell"/>
</dbReference>
<dbReference type="GO" id="GO:0005739">
    <property type="term" value="C:mitochondrion"/>
    <property type="evidence" value="ECO:0007005"/>
    <property type="project" value="TAIR"/>
</dbReference>
<dbReference type="GO" id="GO:0140618">
    <property type="term" value="F:ferric-chelate reductase (NADH) activity"/>
    <property type="evidence" value="ECO:0007669"/>
    <property type="project" value="UniProtKB-EC"/>
</dbReference>
<dbReference type="GO" id="GO:0000293">
    <property type="term" value="F:ferric-chelate reductase activity"/>
    <property type="evidence" value="ECO:0000314"/>
    <property type="project" value="TAIR"/>
</dbReference>
<dbReference type="GO" id="GO:0046872">
    <property type="term" value="F:metal ion binding"/>
    <property type="evidence" value="ECO:0007669"/>
    <property type="project" value="UniProtKB-KW"/>
</dbReference>
<dbReference type="GO" id="GO:0006811">
    <property type="term" value="P:monoatomic ion transport"/>
    <property type="evidence" value="ECO:0007669"/>
    <property type="project" value="UniProtKB-KW"/>
</dbReference>
<dbReference type="CDD" id="cd06186">
    <property type="entry name" value="NOX_Duox_like_FAD_NADP"/>
    <property type="match status" value="1"/>
</dbReference>
<dbReference type="FunFam" id="3.40.50.80:FF:000073">
    <property type="entry name" value="ferric reduction oxidase 8, mitochondrial"/>
    <property type="match status" value="1"/>
</dbReference>
<dbReference type="Gene3D" id="3.40.50.80">
    <property type="entry name" value="Nucleotide-binding domain of ferredoxin-NADP reductase (FNR) module"/>
    <property type="match status" value="2"/>
</dbReference>
<dbReference type="InterPro" id="IPR000778">
    <property type="entry name" value="Cyt_b245_heavy_chain"/>
</dbReference>
<dbReference type="InterPro" id="IPR013112">
    <property type="entry name" value="FAD-bd_8"/>
</dbReference>
<dbReference type="InterPro" id="IPR017927">
    <property type="entry name" value="FAD-bd_FR_type"/>
</dbReference>
<dbReference type="InterPro" id="IPR013130">
    <property type="entry name" value="Fe3_Rdtase_TM_dom"/>
</dbReference>
<dbReference type="InterPro" id="IPR013121">
    <property type="entry name" value="Fe_red_NAD-bd_6"/>
</dbReference>
<dbReference type="InterPro" id="IPR039261">
    <property type="entry name" value="FNR_nucleotide-bd"/>
</dbReference>
<dbReference type="InterPro" id="IPR050369">
    <property type="entry name" value="RBOH/FRE"/>
</dbReference>
<dbReference type="InterPro" id="IPR017938">
    <property type="entry name" value="Riboflavin_synthase-like_b-brl"/>
</dbReference>
<dbReference type="PANTHER" id="PTHR11972:SF155">
    <property type="entry name" value="FERRIC REDUCTION OXIDASE 8, MITOCHONDRIAL"/>
    <property type="match status" value="1"/>
</dbReference>
<dbReference type="PANTHER" id="PTHR11972">
    <property type="entry name" value="NADPH OXIDASE"/>
    <property type="match status" value="1"/>
</dbReference>
<dbReference type="Pfam" id="PF08022">
    <property type="entry name" value="FAD_binding_8"/>
    <property type="match status" value="1"/>
</dbReference>
<dbReference type="Pfam" id="PF01794">
    <property type="entry name" value="Ferric_reduct"/>
    <property type="match status" value="1"/>
</dbReference>
<dbReference type="Pfam" id="PF08030">
    <property type="entry name" value="NAD_binding_6"/>
    <property type="match status" value="1"/>
</dbReference>
<dbReference type="PRINTS" id="PR00466">
    <property type="entry name" value="GP91PHOX"/>
</dbReference>
<dbReference type="SFLD" id="SFLDS00052">
    <property type="entry name" value="Ferric_Reductase_Domain"/>
    <property type="match status" value="1"/>
</dbReference>
<dbReference type="SFLD" id="SFLDG01168">
    <property type="entry name" value="Ferric_reductase_subgroup_(FRE"/>
    <property type="match status" value="1"/>
</dbReference>
<dbReference type="SUPFAM" id="SSF52343">
    <property type="entry name" value="Ferredoxin reductase-like, C-terminal NADP-linked domain"/>
    <property type="match status" value="1"/>
</dbReference>
<dbReference type="SUPFAM" id="SSF63380">
    <property type="entry name" value="Riboflavin synthase domain-like"/>
    <property type="match status" value="1"/>
</dbReference>
<dbReference type="PROSITE" id="PS51384">
    <property type="entry name" value="FAD_FR"/>
    <property type="match status" value="1"/>
</dbReference>
<gene>
    <name type="primary">FRO8</name>
    <name type="ordered locus">At5g50160</name>
    <name type="ORF">K6A12.2</name>
</gene>
<keyword id="KW-0249">Electron transport</keyword>
<keyword id="KW-0274">FAD</keyword>
<keyword id="KW-0285">Flavoprotein</keyword>
<keyword id="KW-0349">Heme</keyword>
<keyword id="KW-0406">Ion transport</keyword>
<keyword id="KW-0408">Iron</keyword>
<keyword id="KW-0472">Membrane</keyword>
<keyword id="KW-0479">Metal-binding</keyword>
<keyword id="KW-0496">Mitochondrion</keyword>
<keyword id="KW-0520">NAD</keyword>
<keyword id="KW-0560">Oxidoreductase</keyword>
<keyword id="KW-1185">Reference proteome</keyword>
<keyword id="KW-0809">Transit peptide</keyword>
<keyword id="KW-0812">Transmembrane</keyword>
<keyword id="KW-1133">Transmembrane helix</keyword>
<keyword id="KW-0813">Transport</keyword>
<proteinExistence type="evidence at protein level"/>
<reference key="1">
    <citation type="journal article" date="2005" name="Plant Cell Physiol.">
        <title>Molecular and biochemical characterization of the Fe(III) chelate reductase gene family in Arabidopsis thaliana.</title>
        <authorList>
            <person name="Wu H."/>
            <person name="Li L."/>
            <person name="Du J."/>
            <person name="Yuan Y."/>
            <person name="Cheng X."/>
            <person name="Ling H.Q."/>
        </authorList>
    </citation>
    <scope>NUCLEOTIDE SEQUENCE [MRNA]</scope>
    <scope>FUNCTION</scope>
    <scope>TISSUE SPECIFICITY</scope>
    <scope>INDUCTION BY IRON</scope>
</reference>
<reference key="2">
    <citation type="journal article" date="2000" name="DNA Res.">
        <title>Structural analysis of Arabidopsis thaliana chromosome 5. X. Sequence features of the regions of 3,076,755 bp covered by sixty P1 and TAC clones.</title>
        <authorList>
            <person name="Sato S."/>
            <person name="Nakamura Y."/>
            <person name="Kaneko T."/>
            <person name="Katoh T."/>
            <person name="Asamizu E."/>
            <person name="Kotani H."/>
            <person name="Tabata S."/>
        </authorList>
    </citation>
    <scope>NUCLEOTIDE SEQUENCE [LARGE SCALE GENOMIC DNA]</scope>
    <source>
        <strain>cv. Columbia</strain>
    </source>
</reference>
<reference key="3">
    <citation type="journal article" date="2017" name="Plant J.">
        <title>Araport11: a complete reannotation of the Arabidopsis thaliana reference genome.</title>
        <authorList>
            <person name="Cheng C.Y."/>
            <person name="Krishnakumar V."/>
            <person name="Chan A.P."/>
            <person name="Thibaud-Nissen F."/>
            <person name="Schobel S."/>
            <person name="Town C.D."/>
        </authorList>
    </citation>
    <scope>GENOME REANNOTATION</scope>
    <source>
        <strain>cv. Columbia</strain>
    </source>
</reference>
<reference key="4">
    <citation type="journal article" date="2003" name="Science">
        <title>Empirical analysis of transcriptional activity in the Arabidopsis genome.</title>
        <authorList>
            <person name="Yamada K."/>
            <person name="Lim J."/>
            <person name="Dale J.M."/>
            <person name="Chen H."/>
            <person name="Shinn P."/>
            <person name="Palm C.J."/>
            <person name="Southwick A.M."/>
            <person name="Wu H.C."/>
            <person name="Kim C.J."/>
            <person name="Nguyen M."/>
            <person name="Pham P.K."/>
            <person name="Cheuk R.F."/>
            <person name="Karlin-Newmann G."/>
            <person name="Liu S.X."/>
            <person name="Lam B."/>
            <person name="Sakano H."/>
            <person name="Wu T."/>
            <person name="Yu G."/>
            <person name="Miranda M."/>
            <person name="Quach H.L."/>
            <person name="Tripp M."/>
            <person name="Chang C.H."/>
            <person name="Lee J.M."/>
            <person name="Toriumi M.J."/>
            <person name="Chan M.M."/>
            <person name="Tang C.C."/>
            <person name="Onodera C.S."/>
            <person name="Deng J.M."/>
            <person name="Akiyama K."/>
            <person name="Ansari Y."/>
            <person name="Arakawa T."/>
            <person name="Banh J."/>
            <person name="Banno F."/>
            <person name="Bowser L."/>
            <person name="Brooks S.Y."/>
            <person name="Carninci P."/>
            <person name="Chao Q."/>
            <person name="Choy N."/>
            <person name="Enju A."/>
            <person name="Goldsmith A.D."/>
            <person name="Gurjal M."/>
            <person name="Hansen N.F."/>
            <person name="Hayashizaki Y."/>
            <person name="Johnson-Hopson C."/>
            <person name="Hsuan V.W."/>
            <person name="Iida K."/>
            <person name="Karnes M."/>
            <person name="Khan S."/>
            <person name="Koesema E."/>
            <person name="Ishida J."/>
            <person name="Jiang P.X."/>
            <person name="Jones T."/>
            <person name="Kawai J."/>
            <person name="Kamiya A."/>
            <person name="Meyers C."/>
            <person name="Nakajima M."/>
            <person name="Narusaka M."/>
            <person name="Seki M."/>
            <person name="Sakurai T."/>
            <person name="Satou M."/>
            <person name="Tamse R."/>
            <person name="Vaysberg M."/>
            <person name="Wallender E.K."/>
            <person name="Wong C."/>
            <person name="Yamamura Y."/>
            <person name="Yuan S."/>
            <person name="Shinozaki K."/>
            <person name="Davis R.W."/>
            <person name="Theologis A."/>
            <person name="Ecker J.R."/>
        </authorList>
    </citation>
    <scope>NUCLEOTIDE SEQUENCE [LARGE SCALE MRNA]</scope>
    <source>
        <strain>cv. Columbia</strain>
    </source>
</reference>
<reference key="5">
    <citation type="journal article" date="2004" name="Plant Cell">
        <title>Experimental analysis of the Arabidopsis mitochondrial proteome highlights signaling and regulatory components, provides assessment of targeting prediction programs, and indicates plant-specific mitochondrial proteins.</title>
        <authorList>
            <person name="Heazlewood J.L."/>
            <person name="Tonti-Filippini J.S."/>
            <person name="Gout A.M."/>
            <person name="Day D.A."/>
            <person name="Whelan J."/>
            <person name="Millar A.H."/>
        </authorList>
    </citation>
    <scope>IDENTIFICATION BY MASS SPECTROMETRY</scope>
    <scope>SUBCELLULAR LOCATION [LARGE SCALE ANALYSIS]</scope>
    <source>
        <strain>cv. Landsberg erecta</strain>
    </source>
</reference>
<reference key="6">
    <citation type="journal article" date="2006" name="Planta">
        <title>Expression profiling of the Arabidopsis ferric chelate reductase (FRO) gene family reveals differential regulation by iron and copper.</title>
        <authorList>
            <person name="Mukherjee I."/>
            <person name="Campbell N.H."/>
            <person name="Ash J.S."/>
            <person name="Connolly E.L."/>
        </authorList>
    </citation>
    <scope>TISSUE SPECIFICITY</scope>
    <scope>INDUCTION BY IRON AND COPPER</scope>
</reference>
<reference key="7">
    <citation type="journal article" date="2009" name="Plant Sci.">
        <title>Iron uptake mechanisms in plants: Functions of the FRO family of ferric reductases.</title>
        <authorList>
            <person name="Jeong J."/>
            <person name="Connolly E.L."/>
        </authorList>
    </citation>
    <scope>GENE FAMILY</scope>
    <scope>NOMENCLATURE</scope>
    <scope>SUBCELLULAR LOCATION</scope>
</reference>
<accession>Q8VY13</accession>
<accession>Q9FGS9</accession>
<sequence>MAKVLTLLVLRLLMNLLLIGWISLWIIKPTTIWIQSWRQAEDTARHTFFGYYGLNFAVFSFPPIALSIVGLIYLSLLPQHHHPTRGGRGAAITVSRPAIINSFIGIVSCFEILALLLFLLFLAWNFYARVSNDFKKLMPVKTMNLNLWQLKYYRVATRFGLLAEACLSLLLFPVLRGLSMFRLLNIEFAASVKYHVWFGTGLIFFSLVHGGSTLFIWTITHHIEEEIWKWQRTGRVYVAGLISLVTGLLMWITSLPQIRRKNFEVFYYTHHLYIVFLVAFLFHAGDRHFYWVLPGMFLFGLDKILRIVQSRSESCILSANLFSCKAIELVLPKDPMLNYAPSSFIFLNIPLVSRFQWHPFSIISSSSVDKHSLSIMMKCEGDWTNSVYNKIEEAANCENKINNIIVRVEGPYGPASVDFLRYDNLFLVAGGIGITPFLSILKELASKNRLKSPKRVQLVFAVRTFQDLNMLLPIASIIFNPIYNLNLKLKVFVTQEKKPSNGTTTLQEFLAQSQVQSIHLGTDEDYSRFPIRGPESFRWLATLVLITVLTFLGFLIGLSHFFIPSEHKNHSGVMKLAASGAMKTAKEKVPSWVPDLIIIVSYVIAISVGGFAATILQRRRKHKEAPRMSKEVVIKPEERNFTELKPIPITEEHEIHIGERPKLEEIMSEFEKNLRGWSSVGVLVCGPESVKEAVASMCRQWPQCFGVEDLRRSRMKMNLNFHSLNFNL</sequence>
<organism>
    <name type="scientific">Arabidopsis thaliana</name>
    <name type="common">Mouse-ear cress</name>
    <dbReference type="NCBI Taxonomy" id="3702"/>
    <lineage>
        <taxon>Eukaryota</taxon>
        <taxon>Viridiplantae</taxon>
        <taxon>Streptophyta</taxon>
        <taxon>Embryophyta</taxon>
        <taxon>Tracheophyta</taxon>
        <taxon>Spermatophyta</taxon>
        <taxon>Magnoliopsida</taxon>
        <taxon>eudicotyledons</taxon>
        <taxon>Gunneridae</taxon>
        <taxon>Pentapetalae</taxon>
        <taxon>rosids</taxon>
        <taxon>malvids</taxon>
        <taxon>Brassicales</taxon>
        <taxon>Brassicaceae</taxon>
        <taxon>Camelineae</taxon>
        <taxon>Arabidopsis</taxon>
    </lineage>
</organism>
<name>FRO8_ARATH</name>
<protein>
    <recommendedName>
        <fullName>Ferric reduction oxidase 8, mitochondrial</fullName>
        <shortName>AtFRO8</shortName>
        <ecNumber>1.16.1.7</ecNumber>
    </recommendedName>
    <alternativeName>
        <fullName>Ferric-chelate reductase 8</fullName>
    </alternativeName>
</protein>
<comment type="function">
    <text evidence="4">Ferric chelate reductase probably involved in iron reduction in leaf veins for transport. May participate in the transport of electrons to a Fe(3+) ion via FAD and heme intermediates.</text>
</comment>
<comment type="catalytic activity">
    <reaction>
        <text>2 a Fe(II)-siderophore + NAD(+) + H(+) = 2 a Fe(III)-siderophore + NADH</text>
        <dbReference type="Rhea" id="RHEA:15061"/>
        <dbReference type="Rhea" id="RHEA-COMP:11342"/>
        <dbReference type="Rhea" id="RHEA-COMP:11344"/>
        <dbReference type="ChEBI" id="CHEBI:15378"/>
        <dbReference type="ChEBI" id="CHEBI:29033"/>
        <dbReference type="ChEBI" id="CHEBI:29034"/>
        <dbReference type="ChEBI" id="CHEBI:57540"/>
        <dbReference type="ChEBI" id="CHEBI:57945"/>
        <dbReference type="EC" id="1.16.1.7"/>
    </reaction>
</comment>
<comment type="cofactor">
    <cofactor evidence="6">
        <name>FAD</name>
        <dbReference type="ChEBI" id="CHEBI:57692"/>
    </cofactor>
</comment>
<comment type="subcellular location">
    <subcellularLocation>
        <location evidence="6">Mitochondrion membrane</location>
        <topology evidence="6">Multi-pass membrane protein</topology>
    </subcellularLocation>
</comment>
<comment type="tissue specificity">
    <text evidence="4 5">Expressed in shoots. Detected in roots, pedicels, flowers, siliques and leaf veins.</text>
</comment>
<comment type="induction">
    <text evidence="4 5">Down-regulated in shoots by copper deficiency. Not regulated by iron availability.</text>
</comment>
<comment type="similarity">
    <text evidence="6">Belongs to the ferric reductase (FRE) family.</text>
</comment>
<comment type="sequence caution" evidence="6">
    <conflict type="erroneous gene model prediction">
        <sequence resource="EMBL-CDS" id="BAB09387"/>
    </conflict>
</comment>